<organism>
    <name type="scientific">Serratia proteamaculans (strain 568)</name>
    <dbReference type="NCBI Taxonomy" id="399741"/>
    <lineage>
        <taxon>Bacteria</taxon>
        <taxon>Pseudomonadati</taxon>
        <taxon>Pseudomonadota</taxon>
        <taxon>Gammaproteobacteria</taxon>
        <taxon>Enterobacterales</taxon>
        <taxon>Yersiniaceae</taxon>
        <taxon>Serratia</taxon>
    </lineage>
</organism>
<dbReference type="EC" id="2.5.1.78" evidence="1"/>
<dbReference type="EMBL" id="CP000826">
    <property type="protein sequence ID" value="ABV40177.1"/>
    <property type="molecule type" value="Genomic_DNA"/>
</dbReference>
<dbReference type="SMR" id="A8GAN7"/>
<dbReference type="STRING" id="399741.Spro_1073"/>
<dbReference type="KEGG" id="spe:Spro_1073"/>
<dbReference type="eggNOG" id="COG0054">
    <property type="taxonomic scope" value="Bacteria"/>
</dbReference>
<dbReference type="HOGENOM" id="CLU_089358_1_1_6"/>
<dbReference type="OrthoDB" id="9809709at2"/>
<dbReference type="UniPathway" id="UPA00275">
    <property type="reaction ID" value="UER00404"/>
</dbReference>
<dbReference type="GO" id="GO:0005829">
    <property type="term" value="C:cytosol"/>
    <property type="evidence" value="ECO:0007669"/>
    <property type="project" value="TreeGrafter"/>
</dbReference>
<dbReference type="GO" id="GO:0009349">
    <property type="term" value="C:riboflavin synthase complex"/>
    <property type="evidence" value="ECO:0007669"/>
    <property type="project" value="InterPro"/>
</dbReference>
<dbReference type="GO" id="GO:0000906">
    <property type="term" value="F:6,7-dimethyl-8-ribityllumazine synthase activity"/>
    <property type="evidence" value="ECO:0007669"/>
    <property type="project" value="UniProtKB-UniRule"/>
</dbReference>
<dbReference type="GO" id="GO:0009231">
    <property type="term" value="P:riboflavin biosynthetic process"/>
    <property type="evidence" value="ECO:0007669"/>
    <property type="project" value="UniProtKB-UniRule"/>
</dbReference>
<dbReference type="CDD" id="cd09209">
    <property type="entry name" value="Lumazine_synthase-I"/>
    <property type="match status" value="1"/>
</dbReference>
<dbReference type="FunFam" id="3.40.50.960:FF:000001">
    <property type="entry name" value="6,7-dimethyl-8-ribityllumazine synthase"/>
    <property type="match status" value="1"/>
</dbReference>
<dbReference type="Gene3D" id="3.40.50.960">
    <property type="entry name" value="Lumazine/riboflavin synthase"/>
    <property type="match status" value="1"/>
</dbReference>
<dbReference type="HAMAP" id="MF_00178">
    <property type="entry name" value="Lumazine_synth"/>
    <property type="match status" value="1"/>
</dbReference>
<dbReference type="InterPro" id="IPR034964">
    <property type="entry name" value="LS"/>
</dbReference>
<dbReference type="InterPro" id="IPR002180">
    <property type="entry name" value="LS/RS"/>
</dbReference>
<dbReference type="InterPro" id="IPR036467">
    <property type="entry name" value="LS/RS_sf"/>
</dbReference>
<dbReference type="NCBIfam" id="TIGR00114">
    <property type="entry name" value="lumazine-synth"/>
    <property type="match status" value="1"/>
</dbReference>
<dbReference type="NCBIfam" id="NF000812">
    <property type="entry name" value="PRK00061.1-4"/>
    <property type="match status" value="1"/>
</dbReference>
<dbReference type="PANTHER" id="PTHR21058:SF0">
    <property type="entry name" value="6,7-DIMETHYL-8-RIBITYLLUMAZINE SYNTHASE"/>
    <property type="match status" value="1"/>
</dbReference>
<dbReference type="PANTHER" id="PTHR21058">
    <property type="entry name" value="6,7-DIMETHYL-8-RIBITYLLUMAZINE SYNTHASE DMRL SYNTHASE LUMAZINE SYNTHASE"/>
    <property type="match status" value="1"/>
</dbReference>
<dbReference type="Pfam" id="PF00885">
    <property type="entry name" value="DMRL_synthase"/>
    <property type="match status" value="1"/>
</dbReference>
<dbReference type="SUPFAM" id="SSF52121">
    <property type="entry name" value="Lumazine synthase"/>
    <property type="match status" value="1"/>
</dbReference>
<accession>A8GAN7</accession>
<protein>
    <recommendedName>
        <fullName evidence="1">6,7-dimethyl-8-ribityllumazine synthase</fullName>
        <shortName evidence="1">DMRL synthase</shortName>
        <shortName evidence="1">LS</shortName>
        <shortName evidence="1">Lumazine synthase</shortName>
        <ecNumber evidence="1">2.5.1.78</ecNumber>
    </recommendedName>
</protein>
<feature type="chain" id="PRO_1000058372" description="6,7-dimethyl-8-ribityllumazine synthase">
    <location>
        <begin position="1"/>
        <end position="156"/>
    </location>
</feature>
<feature type="active site" description="Proton donor" evidence="1">
    <location>
        <position position="89"/>
    </location>
</feature>
<feature type="binding site" evidence="1">
    <location>
        <position position="22"/>
    </location>
    <ligand>
        <name>5-amino-6-(D-ribitylamino)uracil</name>
        <dbReference type="ChEBI" id="CHEBI:15934"/>
    </ligand>
</feature>
<feature type="binding site" evidence="1">
    <location>
        <begin position="57"/>
        <end position="59"/>
    </location>
    <ligand>
        <name>5-amino-6-(D-ribitylamino)uracil</name>
        <dbReference type="ChEBI" id="CHEBI:15934"/>
    </ligand>
</feature>
<feature type="binding site" evidence="1">
    <location>
        <begin position="81"/>
        <end position="83"/>
    </location>
    <ligand>
        <name>5-amino-6-(D-ribitylamino)uracil</name>
        <dbReference type="ChEBI" id="CHEBI:15934"/>
    </ligand>
</feature>
<feature type="binding site" evidence="1">
    <location>
        <begin position="86"/>
        <end position="87"/>
    </location>
    <ligand>
        <name>(2S)-2-hydroxy-3-oxobutyl phosphate</name>
        <dbReference type="ChEBI" id="CHEBI:58830"/>
    </ligand>
</feature>
<feature type="binding site" evidence="1">
    <location>
        <position position="114"/>
    </location>
    <ligand>
        <name>5-amino-6-(D-ribitylamino)uracil</name>
        <dbReference type="ChEBI" id="CHEBI:15934"/>
    </ligand>
</feature>
<feature type="binding site" evidence="1">
    <location>
        <position position="128"/>
    </location>
    <ligand>
        <name>(2S)-2-hydroxy-3-oxobutyl phosphate</name>
        <dbReference type="ChEBI" id="CHEBI:58830"/>
    </ligand>
</feature>
<keyword id="KW-0686">Riboflavin biosynthesis</keyword>
<keyword id="KW-0808">Transferase</keyword>
<comment type="function">
    <text evidence="1">Catalyzes the formation of 6,7-dimethyl-8-ribityllumazine by condensation of 5-amino-6-(D-ribitylamino)uracil with 3,4-dihydroxy-2-butanone 4-phosphate. This is the penultimate step in the biosynthesis of riboflavin.</text>
</comment>
<comment type="catalytic activity">
    <reaction evidence="1">
        <text>(2S)-2-hydroxy-3-oxobutyl phosphate + 5-amino-6-(D-ribitylamino)uracil = 6,7-dimethyl-8-(1-D-ribityl)lumazine + phosphate + 2 H2O + H(+)</text>
        <dbReference type="Rhea" id="RHEA:26152"/>
        <dbReference type="ChEBI" id="CHEBI:15377"/>
        <dbReference type="ChEBI" id="CHEBI:15378"/>
        <dbReference type="ChEBI" id="CHEBI:15934"/>
        <dbReference type="ChEBI" id="CHEBI:43474"/>
        <dbReference type="ChEBI" id="CHEBI:58201"/>
        <dbReference type="ChEBI" id="CHEBI:58830"/>
        <dbReference type="EC" id="2.5.1.78"/>
    </reaction>
</comment>
<comment type="pathway">
    <text evidence="1">Cofactor biosynthesis; riboflavin biosynthesis; riboflavin from 2-hydroxy-3-oxobutyl phosphate and 5-amino-6-(D-ribitylamino)uracil: step 1/2.</text>
</comment>
<comment type="subunit">
    <text evidence="1">Forms an icosahedral capsid composed of 60 subunits, arranged as a dodecamer of pentamers.</text>
</comment>
<comment type="similarity">
    <text evidence="1">Belongs to the DMRL synthase family.</text>
</comment>
<name>RISB_SERP5</name>
<proteinExistence type="inferred from homology"/>
<sequence>MKVIEGVVATPNARVAIAIARFNNFINDSLLQGAIDALKRIGQVADDNITVVWVPGAYELPLTARVLANTGKYDAVIALGTVIRGGTAHFEYVAGEASSGLGSVSLNTEIPVAFGVLTTESIEQAIERAGTKAGNKGAEAALTALEMINVIKAIKA</sequence>
<reference key="1">
    <citation type="submission" date="2007-09" db="EMBL/GenBank/DDBJ databases">
        <title>Complete sequence of chromosome of Serratia proteamaculans 568.</title>
        <authorList>
            <consortium name="US DOE Joint Genome Institute"/>
            <person name="Copeland A."/>
            <person name="Lucas S."/>
            <person name="Lapidus A."/>
            <person name="Barry K."/>
            <person name="Glavina del Rio T."/>
            <person name="Dalin E."/>
            <person name="Tice H."/>
            <person name="Pitluck S."/>
            <person name="Chain P."/>
            <person name="Malfatti S."/>
            <person name="Shin M."/>
            <person name="Vergez L."/>
            <person name="Schmutz J."/>
            <person name="Larimer F."/>
            <person name="Land M."/>
            <person name="Hauser L."/>
            <person name="Kyrpides N."/>
            <person name="Kim E."/>
            <person name="Taghavi S."/>
            <person name="Newman L."/>
            <person name="Vangronsveld J."/>
            <person name="van der Lelie D."/>
            <person name="Richardson P."/>
        </authorList>
    </citation>
    <scope>NUCLEOTIDE SEQUENCE [LARGE SCALE GENOMIC DNA]</scope>
    <source>
        <strain>568</strain>
    </source>
</reference>
<gene>
    <name evidence="1" type="primary">ribH</name>
    <name type="ordered locus">Spro_1073</name>
</gene>
<evidence type="ECO:0000255" key="1">
    <source>
        <dbReference type="HAMAP-Rule" id="MF_00178"/>
    </source>
</evidence>